<feature type="chain" id="PRO_1000122948" description="Bifunctional purine biosynthesis protein PurH">
    <location>
        <begin position="1"/>
        <end position="509"/>
    </location>
</feature>
<feature type="domain" description="MGS-like" evidence="2">
    <location>
        <begin position="1"/>
        <end position="145"/>
    </location>
</feature>
<reference key="1">
    <citation type="journal article" date="2009" name="PLoS ONE">
        <title>Genome sequence of the pathogenic intestinal spirochete Brachyspira hyodysenteriae reveals adaptations to its lifestyle in the porcine large intestine.</title>
        <authorList>
            <person name="Bellgard M.I."/>
            <person name="Wanchanthuek P."/>
            <person name="La T."/>
            <person name="Ryan K."/>
            <person name="Moolhuijzen P."/>
            <person name="Albertyn Z."/>
            <person name="Shaban B."/>
            <person name="Motro Y."/>
            <person name="Dunn D.S."/>
            <person name="Schibeci D."/>
            <person name="Hunter A."/>
            <person name="Barrero R."/>
            <person name="Phillips N.D."/>
            <person name="Hampson D.J."/>
        </authorList>
    </citation>
    <scope>NUCLEOTIDE SEQUENCE [LARGE SCALE GENOMIC DNA]</scope>
    <source>
        <strain>ATCC 49526 / WA1</strain>
    </source>
</reference>
<proteinExistence type="inferred from homology"/>
<protein>
    <recommendedName>
        <fullName evidence="1">Bifunctional purine biosynthesis protein PurH</fullName>
    </recommendedName>
    <domain>
        <recommendedName>
            <fullName evidence="1">Phosphoribosylaminoimidazolecarboxamide formyltransferase</fullName>
            <ecNumber evidence="1">2.1.2.3</ecNumber>
        </recommendedName>
        <alternativeName>
            <fullName evidence="1">AICAR transformylase</fullName>
        </alternativeName>
    </domain>
    <domain>
        <recommendedName>
            <fullName evidence="1">IMP cyclohydrolase</fullName>
            <ecNumber evidence="1">3.5.4.10</ecNumber>
        </recommendedName>
        <alternativeName>
            <fullName evidence="1">ATIC</fullName>
        </alternativeName>
        <alternativeName>
            <fullName evidence="1">IMP synthase</fullName>
        </alternativeName>
        <alternativeName>
            <fullName evidence="1">Inosinicase</fullName>
        </alternativeName>
    </domain>
</protein>
<gene>
    <name evidence="1" type="primary">purH</name>
    <name type="ordered locus">BHWA1_02509</name>
</gene>
<sequence length="509" mass="57057">MIKRALISVFYKDGILDFAKFLTSKNVEIVSTGGTYKYLKENNIPVIEVSEVTGAKEMLDGRVKTLDPKIHGAILAIRDNPTHMETIKERGITPIDMVIVNLYPFFEKVQDDNLKFEEKIEFIDIGGPTMLRSAAKSFKDVVVISDVKDYDLVKSEMEKGEVSFETKKYLASKVFNLTSAYDAAVSEFMFNSLESKEDKKLNYLNMSYALQEELRYGENPHQGASYYVSTTDKGSMKDFEQLNGKELSFNNIRDMDIALKIVLEFDESKKEYACSAIKHSTPCGAALGSSVLEAYNRTYECDPTSIFGGIVAFNSTVDEATAKELIKIFLEIVIAKDFTPEALEVLKTKKNLRVIKYKTNTNDKINLVKVDGGLLVQDEDTTLIEDYKVVTEKKPTEEEMKNLIFGIKVVKYAKSNAIVVIKDFMAKGIGSGQTNRIWACEDALERAGDGVVMASDAFFPFRDVVDACAKYNIKAIIQPGGSMRDQESIDACNEHGIAMIFTGIRHFKH</sequence>
<evidence type="ECO:0000255" key="1">
    <source>
        <dbReference type="HAMAP-Rule" id="MF_00139"/>
    </source>
</evidence>
<evidence type="ECO:0000255" key="2">
    <source>
        <dbReference type="PROSITE-ProRule" id="PRU01202"/>
    </source>
</evidence>
<keyword id="KW-0378">Hydrolase</keyword>
<keyword id="KW-0511">Multifunctional enzyme</keyword>
<keyword id="KW-0658">Purine biosynthesis</keyword>
<keyword id="KW-0808">Transferase</keyword>
<name>PUR9_BRAHW</name>
<organism>
    <name type="scientific">Brachyspira hyodysenteriae (strain ATCC 49526 / WA1)</name>
    <dbReference type="NCBI Taxonomy" id="565034"/>
    <lineage>
        <taxon>Bacteria</taxon>
        <taxon>Pseudomonadati</taxon>
        <taxon>Spirochaetota</taxon>
        <taxon>Spirochaetia</taxon>
        <taxon>Brachyspirales</taxon>
        <taxon>Brachyspiraceae</taxon>
        <taxon>Brachyspira</taxon>
    </lineage>
</organism>
<dbReference type="EC" id="2.1.2.3" evidence="1"/>
<dbReference type="EC" id="3.5.4.10" evidence="1"/>
<dbReference type="EMBL" id="CP001357">
    <property type="protein sequence ID" value="ACN84962.1"/>
    <property type="molecule type" value="Genomic_DNA"/>
</dbReference>
<dbReference type="RefSeq" id="WP_012671989.1">
    <property type="nucleotide sequence ID" value="NC_012225.1"/>
</dbReference>
<dbReference type="SMR" id="C0QXU6"/>
<dbReference type="STRING" id="565034.BHWA1_02509"/>
<dbReference type="KEGG" id="bhy:BHWA1_02509"/>
<dbReference type="eggNOG" id="COG0138">
    <property type="taxonomic scope" value="Bacteria"/>
</dbReference>
<dbReference type="HOGENOM" id="CLU_016316_5_2_12"/>
<dbReference type="UniPathway" id="UPA00074">
    <property type="reaction ID" value="UER00133"/>
</dbReference>
<dbReference type="UniPathway" id="UPA00074">
    <property type="reaction ID" value="UER00135"/>
</dbReference>
<dbReference type="Proteomes" id="UP000001803">
    <property type="component" value="Chromosome"/>
</dbReference>
<dbReference type="GO" id="GO:0005829">
    <property type="term" value="C:cytosol"/>
    <property type="evidence" value="ECO:0007669"/>
    <property type="project" value="TreeGrafter"/>
</dbReference>
<dbReference type="GO" id="GO:0003937">
    <property type="term" value="F:IMP cyclohydrolase activity"/>
    <property type="evidence" value="ECO:0007669"/>
    <property type="project" value="UniProtKB-UniRule"/>
</dbReference>
<dbReference type="GO" id="GO:0004643">
    <property type="term" value="F:phosphoribosylaminoimidazolecarboxamide formyltransferase activity"/>
    <property type="evidence" value="ECO:0007669"/>
    <property type="project" value="UniProtKB-UniRule"/>
</dbReference>
<dbReference type="GO" id="GO:0006189">
    <property type="term" value="P:'de novo' IMP biosynthetic process"/>
    <property type="evidence" value="ECO:0007669"/>
    <property type="project" value="UniProtKB-UniRule"/>
</dbReference>
<dbReference type="CDD" id="cd01421">
    <property type="entry name" value="IMPCH"/>
    <property type="match status" value="1"/>
</dbReference>
<dbReference type="FunFam" id="3.40.140.20:FF:000001">
    <property type="entry name" value="Bifunctional purine biosynthesis protein PurH"/>
    <property type="match status" value="1"/>
</dbReference>
<dbReference type="FunFam" id="3.40.50.1380:FF:000001">
    <property type="entry name" value="Bifunctional purine biosynthesis protein PurH"/>
    <property type="match status" value="1"/>
</dbReference>
<dbReference type="Gene3D" id="3.40.140.20">
    <property type="match status" value="2"/>
</dbReference>
<dbReference type="Gene3D" id="3.40.50.1380">
    <property type="entry name" value="Methylglyoxal synthase-like domain"/>
    <property type="match status" value="1"/>
</dbReference>
<dbReference type="HAMAP" id="MF_00139">
    <property type="entry name" value="PurH"/>
    <property type="match status" value="1"/>
</dbReference>
<dbReference type="InterPro" id="IPR024051">
    <property type="entry name" value="AICAR_Tfase_dup_dom_sf"/>
</dbReference>
<dbReference type="InterPro" id="IPR016193">
    <property type="entry name" value="Cytidine_deaminase-like"/>
</dbReference>
<dbReference type="InterPro" id="IPR011607">
    <property type="entry name" value="MGS-like_dom"/>
</dbReference>
<dbReference type="InterPro" id="IPR036914">
    <property type="entry name" value="MGS-like_dom_sf"/>
</dbReference>
<dbReference type="InterPro" id="IPR002695">
    <property type="entry name" value="PurH-like"/>
</dbReference>
<dbReference type="NCBIfam" id="NF002049">
    <property type="entry name" value="PRK00881.1"/>
    <property type="match status" value="1"/>
</dbReference>
<dbReference type="NCBIfam" id="TIGR00355">
    <property type="entry name" value="purH"/>
    <property type="match status" value="1"/>
</dbReference>
<dbReference type="PANTHER" id="PTHR11692:SF0">
    <property type="entry name" value="BIFUNCTIONAL PURINE BIOSYNTHESIS PROTEIN ATIC"/>
    <property type="match status" value="1"/>
</dbReference>
<dbReference type="PANTHER" id="PTHR11692">
    <property type="entry name" value="BIFUNCTIONAL PURINE BIOSYNTHESIS PROTEIN PURH"/>
    <property type="match status" value="1"/>
</dbReference>
<dbReference type="Pfam" id="PF01808">
    <property type="entry name" value="AICARFT_IMPCHas"/>
    <property type="match status" value="1"/>
</dbReference>
<dbReference type="Pfam" id="PF02142">
    <property type="entry name" value="MGS"/>
    <property type="match status" value="1"/>
</dbReference>
<dbReference type="PIRSF" id="PIRSF000414">
    <property type="entry name" value="AICARFT_IMPCHas"/>
    <property type="match status" value="1"/>
</dbReference>
<dbReference type="SMART" id="SM00798">
    <property type="entry name" value="AICARFT_IMPCHas"/>
    <property type="match status" value="1"/>
</dbReference>
<dbReference type="SMART" id="SM00851">
    <property type="entry name" value="MGS"/>
    <property type="match status" value="1"/>
</dbReference>
<dbReference type="SUPFAM" id="SSF53927">
    <property type="entry name" value="Cytidine deaminase-like"/>
    <property type="match status" value="1"/>
</dbReference>
<dbReference type="SUPFAM" id="SSF52335">
    <property type="entry name" value="Methylglyoxal synthase-like"/>
    <property type="match status" value="1"/>
</dbReference>
<dbReference type="PROSITE" id="PS51855">
    <property type="entry name" value="MGS"/>
    <property type="match status" value="1"/>
</dbReference>
<accession>C0QXU6</accession>
<comment type="catalytic activity">
    <reaction evidence="1">
        <text>(6R)-10-formyltetrahydrofolate + 5-amino-1-(5-phospho-beta-D-ribosyl)imidazole-4-carboxamide = 5-formamido-1-(5-phospho-D-ribosyl)imidazole-4-carboxamide + (6S)-5,6,7,8-tetrahydrofolate</text>
        <dbReference type="Rhea" id="RHEA:22192"/>
        <dbReference type="ChEBI" id="CHEBI:57453"/>
        <dbReference type="ChEBI" id="CHEBI:58467"/>
        <dbReference type="ChEBI" id="CHEBI:58475"/>
        <dbReference type="ChEBI" id="CHEBI:195366"/>
        <dbReference type="EC" id="2.1.2.3"/>
    </reaction>
</comment>
<comment type="catalytic activity">
    <reaction evidence="1">
        <text>IMP + H2O = 5-formamido-1-(5-phospho-D-ribosyl)imidazole-4-carboxamide</text>
        <dbReference type="Rhea" id="RHEA:18445"/>
        <dbReference type="ChEBI" id="CHEBI:15377"/>
        <dbReference type="ChEBI" id="CHEBI:58053"/>
        <dbReference type="ChEBI" id="CHEBI:58467"/>
        <dbReference type="EC" id="3.5.4.10"/>
    </reaction>
</comment>
<comment type="pathway">
    <text evidence="1">Purine metabolism; IMP biosynthesis via de novo pathway; 5-formamido-1-(5-phospho-D-ribosyl)imidazole-4-carboxamide from 5-amino-1-(5-phospho-D-ribosyl)imidazole-4-carboxamide (10-formyl THF route): step 1/1.</text>
</comment>
<comment type="pathway">
    <text evidence="1">Purine metabolism; IMP biosynthesis via de novo pathway; IMP from 5-formamido-1-(5-phospho-D-ribosyl)imidazole-4-carboxamide: step 1/1.</text>
</comment>
<comment type="domain">
    <text evidence="1">The IMP cyclohydrolase activity resides in the N-terminal region.</text>
</comment>
<comment type="similarity">
    <text evidence="1">Belongs to the PurH family.</text>
</comment>